<gene>
    <name evidence="1" type="primary">clpX</name>
    <name type="ordered locus">A1I_02875</name>
</gene>
<keyword id="KW-0067">ATP-binding</keyword>
<keyword id="KW-0143">Chaperone</keyword>
<keyword id="KW-0479">Metal-binding</keyword>
<keyword id="KW-0547">Nucleotide-binding</keyword>
<keyword id="KW-0862">Zinc</keyword>
<comment type="function">
    <text evidence="1">ATP-dependent specificity component of the Clp protease. It directs the protease to specific substrates. Can perform chaperone functions in the absence of ClpP.</text>
</comment>
<comment type="subunit">
    <text evidence="1">Component of the ClpX-ClpP complex. Forms a hexameric ring that, in the presence of ATP, binds to fourteen ClpP subunits assembled into a disk-like structure with a central cavity, resembling the structure of eukaryotic proteasomes.</text>
</comment>
<comment type="similarity">
    <text evidence="1">Belongs to the ClpX chaperone family.</text>
</comment>
<feature type="chain" id="PRO_1000024643" description="ATP-dependent Clp protease ATP-binding subunit ClpX">
    <location>
        <begin position="1"/>
        <end position="427"/>
    </location>
</feature>
<feature type="domain" description="ClpX-type ZB" evidence="2">
    <location>
        <begin position="1"/>
        <end position="53"/>
    </location>
</feature>
<feature type="binding site" evidence="2">
    <location>
        <position position="12"/>
    </location>
    <ligand>
        <name>Zn(2+)</name>
        <dbReference type="ChEBI" id="CHEBI:29105"/>
    </ligand>
</feature>
<feature type="binding site" evidence="2">
    <location>
        <position position="15"/>
    </location>
    <ligand>
        <name>Zn(2+)</name>
        <dbReference type="ChEBI" id="CHEBI:29105"/>
    </ligand>
</feature>
<feature type="binding site" evidence="2">
    <location>
        <position position="34"/>
    </location>
    <ligand>
        <name>Zn(2+)</name>
        <dbReference type="ChEBI" id="CHEBI:29105"/>
    </ligand>
</feature>
<feature type="binding site" evidence="2">
    <location>
        <position position="37"/>
    </location>
    <ligand>
        <name>Zn(2+)</name>
        <dbReference type="ChEBI" id="CHEBI:29105"/>
    </ligand>
</feature>
<feature type="binding site" evidence="1">
    <location>
        <begin position="117"/>
        <end position="124"/>
    </location>
    <ligand>
        <name>ATP</name>
        <dbReference type="ChEBI" id="CHEBI:30616"/>
    </ligand>
</feature>
<organism>
    <name type="scientific">Rickettsia bellii (strain OSU 85-389)</name>
    <dbReference type="NCBI Taxonomy" id="391896"/>
    <lineage>
        <taxon>Bacteria</taxon>
        <taxon>Pseudomonadati</taxon>
        <taxon>Pseudomonadota</taxon>
        <taxon>Alphaproteobacteria</taxon>
        <taxon>Rickettsiales</taxon>
        <taxon>Rickettsiaceae</taxon>
        <taxon>Rickettsieae</taxon>
        <taxon>Rickettsia</taxon>
        <taxon>belli group</taxon>
    </lineage>
</organism>
<reference key="1">
    <citation type="submission" date="2007-09" db="EMBL/GenBank/DDBJ databases">
        <title>Complete genome sequencing of Rickettsia bellii.</title>
        <authorList>
            <person name="Madan A."/>
            <person name="Lee H."/>
            <person name="Madan A."/>
            <person name="Yoon J.-G."/>
            <person name="Ryu G.-Y."/>
            <person name="Dasch G."/>
            <person name="Ereemeva M."/>
        </authorList>
    </citation>
    <scope>NUCLEOTIDE SEQUENCE [LARGE SCALE GENOMIC DNA]</scope>
    <source>
        <strain>OSU 85-389</strain>
    </source>
</reference>
<dbReference type="EMBL" id="CP000849">
    <property type="protein sequence ID" value="ABV78946.1"/>
    <property type="molecule type" value="Genomic_DNA"/>
</dbReference>
<dbReference type="RefSeq" id="WP_012151748.1">
    <property type="nucleotide sequence ID" value="NC_009883.1"/>
</dbReference>
<dbReference type="SMR" id="A8GVR9"/>
<dbReference type="KEGG" id="rbo:A1I_02875"/>
<dbReference type="HOGENOM" id="CLU_014218_8_2_5"/>
<dbReference type="GO" id="GO:0009376">
    <property type="term" value="C:HslUV protease complex"/>
    <property type="evidence" value="ECO:0007669"/>
    <property type="project" value="TreeGrafter"/>
</dbReference>
<dbReference type="GO" id="GO:0005524">
    <property type="term" value="F:ATP binding"/>
    <property type="evidence" value="ECO:0007669"/>
    <property type="project" value="UniProtKB-UniRule"/>
</dbReference>
<dbReference type="GO" id="GO:0016887">
    <property type="term" value="F:ATP hydrolysis activity"/>
    <property type="evidence" value="ECO:0007669"/>
    <property type="project" value="InterPro"/>
</dbReference>
<dbReference type="GO" id="GO:0140662">
    <property type="term" value="F:ATP-dependent protein folding chaperone"/>
    <property type="evidence" value="ECO:0007669"/>
    <property type="project" value="InterPro"/>
</dbReference>
<dbReference type="GO" id="GO:0046983">
    <property type="term" value="F:protein dimerization activity"/>
    <property type="evidence" value="ECO:0007669"/>
    <property type="project" value="InterPro"/>
</dbReference>
<dbReference type="GO" id="GO:0051082">
    <property type="term" value="F:unfolded protein binding"/>
    <property type="evidence" value="ECO:0007669"/>
    <property type="project" value="UniProtKB-UniRule"/>
</dbReference>
<dbReference type="GO" id="GO:0008270">
    <property type="term" value="F:zinc ion binding"/>
    <property type="evidence" value="ECO:0007669"/>
    <property type="project" value="InterPro"/>
</dbReference>
<dbReference type="GO" id="GO:0051301">
    <property type="term" value="P:cell division"/>
    <property type="evidence" value="ECO:0007669"/>
    <property type="project" value="TreeGrafter"/>
</dbReference>
<dbReference type="GO" id="GO:0051603">
    <property type="term" value="P:proteolysis involved in protein catabolic process"/>
    <property type="evidence" value="ECO:0007669"/>
    <property type="project" value="TreeGrafter"/>
</dbReference>
<dbReference type="CDD" id="cd19497">
    <property type="entry name" value="RecA-like_ClpX"/>
    <property type="match status" value="1"/>
</dbReference>
<dbReference type="FunFam" id="1.10.8.60:FF:000002">
    <property type="entry name" value="ATP-dependent Clp protease ATP-binding subunit ClpX"/>
    <property type="match status" value="1"/>
</dbReference>
<dbReference type="FunFam" id="3.40.50.300:FF:000005">
    <property type="entry name" value="ATP-dependent Clp protease ATP-binding subunit ClpX"/>
    <property type="match status" value="1"/>
</dbReference>
<dbReference type="Gene3D" id="1.10.8.60">
    <property type="match status" value="1"/>
</dbReference>
<dbReference type="Gene3D" id="6.20.220.10">
    <property type="entry name" value="ClpX chaperone, C4-type zinc finger domain"/>
    <property type="match status" value="1"/>
</dbReference>
<dbReference type="Gene3D" id="3.40.50.300">
    <property type="entry name" value="P-loop containing nucleotide triphosphate hydrolases"/>
    <property type="match status" value="1"/>
</dbReference>
<dbReference type="HAMAP" id="MF_00175">
    <property type="entry name" value="ClpX"/>
    <property type="match status" value="1"/>
</dbReference>
<dbReference type="InterPro" id="IPR003593">
    <property type="entry name" value="AAA+_ATPase"/>
</dbReference>
<dbReference type="InterPro" id="IPR050052">
    <property type="entry name" value="ATP-dep_Clp_protease_ClpX"/>
</dbReference>
<dbReference type="InterPro" id="IPR003959">
    <property type="entry name" value="ATPase_AAA_core"/>
</dbReference>
<dbReference type="InterPro" id="IPR019489">
    <property type="entry name" value="Clp_ATPase_C"/>
</dbReference>
<dbReference type="InterPro" id="IPR004487">
    <property type="entry name" value="Clp_protease_ATP-bd_su_ClpX"/>
</dbReference>
<dbReference type="InterPro" id="IPR046425">
    <property type="entry name" value="ClpX_bact"/>
</dbReference>
<dbReference type="InterPro" id="IPR027417">
    <property type="entry name" value="P-loop_NTPase"/>
</dbReference>
<dbReference type="InterPro" id="IPR010603">
    <property type="entry name" value="Znf_CppX_C4"/>
</dbReference>
<dbReference type="InterPro" id="IPR038366">
    <property type="entry name" value="Znf_CppX_C4_sf"/>
</dbReference>
<dbReference type="NCBIfam" id="TIGR00382">
    <property type="entry name" value="clpX"/>
    <property type="match status" value="1"/>
</dbReference>
<dbReference type="NCBIfam" id="NF003745">
    <property type="entry name" value="PRK05342.1"/>
    <property type="match status" value="1"/>
</dbReference>
<dbReference type="PANTHER" id="PTHR48102:SF7">
    <property type="entry name" value="ATP-DEPENDENT CLP PROTEASE ATP-BINDING SUBUNIT CLPX-LIKE, MITOCHONDRIAL"/>
    <property type="match status" value="1"/>
</dbReference>
<dbReference type="PANTHER" id="PTHR48102">
    <property type="entry name" value="ATP-DEPENDENT CLP PROTEASE ATP-BINDING SUBUNIT CLPX-LIKE, MITOCHONDRIAL-RELATED"/>
    <property type="match status" value="1"/>
</dbReference>
<dbReference type="Pfam" id="PF07724">
    <property type="entry name" value="AAA_2"/>
    <property type="match status" value="1"/>
</dbReference>
<dbReference type="Pfam" id="PF10431">
    <property type="entry name" value="ClpB_D2-small"/>
    <property type="match status" value="1"/>
</dbReference>
<dbReference type="Pfam" id="PF06689">
    <property type="entry name" value="zf-C4_ClpX"/>
    <property type="match status" value="1"/>
</dbReference>
<dbReference type="SMART" id="SM00382">
    <property type="entry name" value="AAA"/>
    <property type="match status" value="1"/>
</dbReference>
<dbReference type="SMART" id="SM01086">
    <property type="entry name" value="ClpB_D2-small"/>
    <property type="match status" value="1"/>
</dbReference>
<dbReference type="SMART" id="SM00994">
    <property type="entry name" value="zf-C4_ClpX"/>
    <property type="match status" value="1"/>
</dbReference>
<dbReference type="SUPFAM" id="SSF57716">
    <property type="entry name" value="Glucocorticoid receptor-like (DNA-binding domain)"/>
    <property type="match status" value="1"/>
</dbReference>
<dbReference type="SUPFAM" id="SSF52540">
    <property type="entry name" value="P-loop containing nucleoside triphosphate hydrolases"/>
    <property type="match status" value="1"/>
</dbReference>
<dbReference type="PROSITE" id="PS51902">
    <property type="entry name" value="CLPX_ZB"/>
    <property type="match status" value="1"/>
</dbReference>
<proteinExistence type="inferred from homology"/>
<name>CLPX_RICB8</name>
<sequence>MVVEANKKELICSFCSKKQHEVKKLIAGPAVFICDECINLCMDIMEEESKIALKQITSTIPTPQKICSVLNDYVVGQEQAKKVLAVAVYNHYKRLEYVQSGNNDVELNKSNILLIGPTGSGKTLLAQTLAKILDVPFTMADATSLTEAGYVGEDVENILLRLLQAAEFNVAKAQKGIIYIDEVDKIARKSENPSITRDVSGEGVQQALLKIMEGTVASVPPQGGRKHPQQDFVQLDTSNILFICGGAFMGIDSIITSRTNNSSIGFAANVNIDKEKINREILKSLEIEDLTKFGLIPEFIGRLPIVTTLDDLDKEALVTILTKPKNAIVKQFKKQFELDEAELIVEDSALEAIAEKALAKKTGARGLRSIIEHLLLDSMYKVAELKKQRVTITEDVVKGLIEPIITSIITPTAKTSKKQAAVEDIPA</sequence>
<accession>A8GVR9</accession>
<protein>
    <recommendedName>
        <fullName evidence="1">ATP-dependent Clp protease ATP-binding subunit ClpX</fullName>
    </recommendedName>
</protein>
<evidence type="ECO:0000255" key="1">
    <source>
        <dbReference type="HAMAP-Rule" id="MF_00175"/>
    </source>
</evidence>
<evidence type="ECO:0000255" key="2">
    <source>
        <dbReference type="PROSITE-ProRule" id="PRU01250"/>
    </source>
</evidence>